<feature type="chain" id="PRO_1000073670" description="Tyrosine recombinase XerC">
    <location>
        <begin position="1"/>
        <end position="299"/>
    </location>
</feature>
<feature type="domain" description="Core-binding (CB)" evidence="3">
    <location>
        <begin position="3"/>
        <end position="87"/>
    </location>
</feature>
<feature type="domain" description="Tyr recombinase" evidence="2">
    <location>
        <begin position="108"/>
        <end position="287"/>
    </location>
</feature>
<feature type="active site" evidence="1">
    <location>
        <position position="147"/>
    </location>
</feature>
<feature type="active site" evidence="1">
    <location>
        <position position="171"/>
    </location>
</feature>
<feature type="active site" evidence="1">
    <location>
        <position position="239"/>
    </location>
</feature>
<feature type="active site" evidence="1">
    <location>
        <position position="242"/>
    </location>
</feature>
<feature type="active site" evidence="1">
    <location>
        <position position="265"/>
    </location>
</feature>
<feature type="active site" description="O-(3'-phospho-DNA)-tyrosine intermediate" evidence="1">
    <location>
        <position position="274"/>
    </location>
</feature>
<evidence type="ECO:0000255" key="1">
    <source>
        <dbReference type="HAMAP-Rule" id="MF_01808"/>
    </source>
</evidence>
<evidence type="ECO:0000255" key="2">
    <source>
        <dbReference type="PROSITE-ProRule" id="PRU01246"/>
    </source>
</evidence>
<evidence type="ECO:0000255" key="3">
    <source>
        <dbReference type="PROSITE-ProRule" id="PRU01248"/>
    </source>
</evidence>
<reference key="1">
    <citation type="submission" date="2006-08" db="EMBL/GenBank/DDBJ databases">
        <title>Complete sequence of Shewanella sp. MR-4.</title>
        <authorList>
            <consortium name="US DOE Joint Genome Institute"/>
            <person name="Copeland A."/>
            <person name="Lucas S."/>
            <person name="Lapidus A."/>
            <person name="Barry K."/>
            <person name="Detter J.C."/>
            <person name="Glavina del Rio T."/>
            <person name="Hammon N."/>
            <person name="Israni S."/>
            <person name="Dalin E."/>
            <person name="Tice H."/>
            <person name="Pitluck S."/>
            <person name="Kiss H."/>
            <person name="Brettin T."/>
            <person name="Bruce D."/>
            <person name="Han C."/>
            <person name="Tapia R."/>
            <person name="Gilna P."/>
            <person name="Schmutz J."/>
            <person name="Larimer F."/>
            <person name="Land M."/>
            <person name="Hauser L."/>
            <person name="Kyrpides N."/>
            <person name="Mikhailova N."/>
            <person name="Nealson K."/>
            <person name="Konstantinidis K."/>
            <person name="Klappenbach J."/>
            <person name="Tiedje J."/>
            <person name="Richardson P."/>
        </authorList>
    </citation>
    <scope>NUCLEOTIDE SEQUENCE [LARGE SCALE GENOMIC DNA]</scope>
    <source>
        <strain>MR-4</strain>
    </source>
</reference>
<protein>
    <recommendedName>
        <fullName evidence="1">Tyrosine recombinase XerC</fullName>
    </recommendedName>
</protein>
<keyword id="KW-0131">Cell cycle</keyword>
<keyword id="KW-0132">Cell division</keyword>
<keyword id="KW-0159">Chromosome partition</keyword>
<keyword id="KW-0963">Cytoplasm</keyword>
<keyword id="KW-0229">DNA integration</keyword>
<keyword id="KW-0233">DNA recombination</keyword>
<keyword id="KW-0238">DNA-binding</keyword>
<name>XERC_SHESM</name>
<proteinExistence type="inferred from homology"/>
<dbReference type="EMBL" id="CP000446">
    <property type="protein sequence ID" value="ABI37474.1"/>
    <property type="molecule type" value="Genomic_DNA"/>
</dbReference>
<dbReference type="RefSeq" id="WP_011621200.1">
    <property type="nucleotide sequence ID" value="NC_008321.1"/>
</dbReference>
<dbReference type="SMR" id="Q0HN93"/>
<dbReference type="KEGG" id="she:Shewmr4_0394"/>
<dbReference type="HOGENOM" id="CLU_027562_9_0_6"/>
<dbReference type="GO" id="GO:0005737">
    <property type="term" value="C:cytoplasm"/>
    <property type="evidence" value="ECO:0007669"/>
    <property type="project" value="UniProtKB-SubCell"/>
</dbReference>
<dbReference type="GO" id="GO:0003677">
    <property type="term" value="F:DNA binding"/>
    <property type="evidence" value="ECO:0007669"/>
    <property type="project" value="UniProtKB-KW"/>
</dbReference>
<dbReference type="GO" id="GO:0009037">
    <property type="term" value="F:tyrosine-based site-specific recombinase activity"/>
    <property type="evidence" value="ECO:0007669"/>
    <property type="project" value="UniProtKB-UniRule"/>
</dbReference>
<dbReference type="GO" id="GO:0051301">
    <property type="term" value="P:cell division"/>
    <property type="evidence" value="ECO:0007669"/>
    <property type="project" value="UniProtKB-KW"/>
</dbReference>
<dbReference type="GO" id="GO:0007059">
    <property type="term" value="P:chromosome segregation"/>
    <property type="evidence" value="ECO:0007669"/>
    <property type="project" value="UniProtKB-UniRule"/>
</dbReference>
<dbReference type="GO" id="GO:0006313">
    <property type="term" value="P:DNA transposition"/>
    <property type="evidence" value="ECO:0007669"/>
    <property type="project" value="UniProtKB-UniRule"/>
</dbReference>
<dbReference type="CDD" id="cd00798">
    <property type="entry name" value="INT_XerDC_C"/>
    <property type="match status" value="1"/>
</dbReference>
<dbReference type="Gene3D" id="1.10.150.130">
    <property type="match status" value="1"/>
</dbReference>
<dbReference type="Gene3D" id="1.10.443.10">
    <property type="entry name" value="Intergrase catalytic core"/>
    <property type="match status" value="1"/>
</dbReference>
<dbReference type="HAMAP" id="MF_01808">
    <property type="entry name" value="Recomb_XerC_XerD"/>
    <property type="match status" value="1"/>
</dbReference>
<dbReference type="InterPro" id="IPR044068">
    <property type="entry name" value="CB"/>
</dbReference>
<dbReference type="InterPro" id="IPR011010">
    <property type="entry name" value="DNA_brk_join_enz"/>
</dbReference>
<dbReference type="InterPro" id="IPR013762">
    <property type="entry name" value="Integrase-like_cat_sf"/>
</dbReference>
<dbReference type="InterPro" id="IPR002104">
    <property type="entry name" value="Integrase_catalytic"/>
</dbReference>
<dbReference type="InterPro" id="IPR010998">
    <property type="entry name" value="Integrase_recombinase_N"/>
</dbReference>
<dbReference type="InterPro" id="IPR004107">
    <property type="entry name" value="Integrase_SAM-like_N"/>
</dbReference>
<dbReference type="InterPro" id="IPR011931">
    <property type="entry name" value="Recomb_XerC"/>
</dbReference>
<dbReference type="InterPro" id="IPR023009">
    <property type="entry name" value="Tyrosine_recombinase_XerC/XerD"/>
</dbReference>
<dbReference type="InterPro" id="IPR050090">
    <property type="entry name" value="Tyrosine_recombinase_XerCD"/>
</dbReference>
<dbReference type="NCBIfam" id="TIGR02224">
    <property type="entry name" value="recomb_XerC"/>
    <property type="match status" value="1"/>
</dbReference>
<dbReference type="PANTHER" id="PTHR30349">
    <property type="entry name" value="PHAGE INTEGRASE-RELATED"/>
    <property type="match status" value="1"/>
</dbReference>
<dbReference type="PANTHER" id="PTHR30349:SF81">
    <property type="entry name" value="TYROSINE RECOMBINASE XERC"/>
    <property type="match status" value="1"/>
</dbReference>
<dbReference type="Pfam" id="PF02899">
    <property type="entry name" value="Phage_int_SAM_1"/>
    <property type="match status" value="1"/>
</dbReference>
<dbReference type="Pfam" id="PF00589">
    <property type="entry name" value="Phage_integrase"/>
    <property type="match status" value="1"/>
</dbReference>
<dbReference type="SUPFAM" id="SSF56349">
    <property type="entry name" value="DNA breaking-rejoining enzymes"/>
    <property type="match status" value="1"/>
</dbReference>
<dbReference type="SUPFAM" id="SSF47823">
    <property type="entry name" value="lambda integrase-like, N-terminal domain"/>
    <property type="match status" value="1"/>
</dbReference>
<dbReference type="PROSITE" id="PS51900">
    <property type="entry name" value="CB"/>
    <property type="match status" value="1"/>
</dbReference>
<dbReference type="PROSITE" id="PS51898">
    <property type="entry name" value="TYR_RECOMBINASE"/>
    <property type="match status" value="1"/>
</dbReference>
<comment type="function">
    <text evidence="1">Site-specific tyrosine recombinase, which acts by catalyzing the cutting and rejoining of the recombining DNA molecules. The XerC-XerD complex is essential to convert dimers of the bacterial chromosome into monomers to permit their segregation at cell division. It also contributes to the segregational stability of plasmids.</text>
</comment>
<comment type="subunit">
    <text evidence="1">Forms a cyclic heterotetrameric complex composed of two molecules of XerC and two molecules of XerD.</text>
</comment>
<comment type="subcellular location">
    <subcellularLocation>
        <location evidence="1">Cytoplasm</location>
    </subcellularLocation>
</comment>
<comment type="similarity">
    <text evidence="1">Belongs to the 'phage' integrase family. XerC subfamily.</text>
</comment>
<organism>
    <name type="scientific">Shewanella sp. (strain MR-4)</name>
    <dbReference type="NCBI Taxonomy" id="60480"/>
    <lineage>
        <taxon>Bacteria</taxon>
        <taxon>Pseudomonadati</taxon>
        <taxon>Pseudomonadota</taxon>
        <taxon>Gammaproteobacteria</taxon>
        <taxon>Alteromonadales</taxon>
        <taxon>Shewanellaceae</taxon>
        <taxon>Shewanella</taxon>
    </lineage>
</organism>
<accession>Q0HN93</accession>
<gene>
    <name evidence="1" type="primary">xerC</name>
    <name type="ordered locus">Shewmr4_0394</name>
</gene>
<sequence length="299" mass="34112">MTPQCQSYLQQFETYMQSERQLSAHTVRNYMYELQRGSELLPEGVDLLNVGREHWQQVLAKLHRKGLSPRSLSLWLSAIKQWGEFLLRSGVIELNPAKGLSAPKQAKPLPKNIDVDSISHLLAIEGNDPLTLRDKAIMELFYSSGLRLAELAALDLSSVQYDQHEVRVLGKGNKERIVPVGRYAIEAISAWLKCRKQISCEDNALFVTEKGKRLSHRSIQARMSKWGQEQALSMRVHPHKLRHSFATHMLESSADLRAVQELLGHENLSTTQIYTSLDFQHLAKVYDNAHPRAKKQQDK</sequence>